<gene>
    <name evidence="1" type="primary">rplV</name>
    <name type="ordered locus">BF3998</name>
</gene>
<proteinExistence type="inferred from homology"/>
<accession>Q5L8B4</accession>
<dbReference type="EMBL" id="CR626927">
    <property type="protein sequence ID" value="CAH09674.1"/>
    <property type="status" value="ALT_INIT"/>
    <property type="molecule type" value="Genomic_DNA"/>
</dbReference>
<dbReference type="RefSeq" id="WP_004291236.1">
    <property type="nucleotide sequence ID" value="NZ_UFTH01000001.1"/>
</dbReference>
<dbReference type="SMR" id="Q5L8B4"/>
<dbReference type="PaxDb" id="272559-BF9343_3893"/>
<dbReference type="GeneID" id="93105319"/>
<dbReference type="KEGG" id="bfs:BF9343_3893"/>
<dbReference type="eggNOG" id="COG0091">
    <property type="taxonomic scope" value="Bacteria"/>
</dbReference>
<dbReference type="HOGENOM" id="CLU_083987_3_1_10"/>
<dbReference type="Proteomes" id="UP000006731">
    <property type="component" value="Chromosome"/>
</dbReference>
<dbReference type="GO" id="GO:0022625">
    <property type="term" value="C:cytosolic large ribosomal subunit"/>
    <property type="evidence" value="ECO:0007669"/>
    <property type="project" value="TreeGrafter"/>
</dbReference>
<dbReference type="GO" id="GO:0019843">
    <property type="term" value="F:rRNA binding"/>
    <property type="evidence" value="ECO:0007669"/>
    <property type="project" value="UniProtKB-UniRule"/>
</dbReference>
<dbReference type="GO" id="GO:0003735">
    <property type="term" value="F:structural constituent of ribosome"/>
    <property type="evidence" value="ECO:0007669"/>
    <property type="project" value="InterPro"/>
</dbReference>
<dbReference type="GO" id="GO:0006412">
    <property type="term" value="P:translation"/>
    <property type="evidence" value="ECO:0007669"/>
    <property type="project" value="UniProtKB-UniRule"/>
</dbReference>
<dbReference type="CDD" id="cd00336">
    <property type="entry name" value="Ribosomal_L22"/>
    <property type="match status" value="1"/>
</dbReference>
<dbReference type="FunFam" id="3.90.470.10:FF:000008">
    <property type="entry name" value="50S ribosomal protein L22"/>
    <property type="match status" value="1"/>
</dbReference>
<dbReference type="Gene3D" id="3.90.470.10">
    <property type="entry name" value="Ribosomal protein L22/L17"/>
    <property type="match status" value="1"/>
</dbReference>
<dbReference type="HAMAP" id="MF_01331_B">
    <property type="entry name" value="Ribosomal_uL22_B"/>
    <property type="match status" value="1"/>
</dbReference>
<dbReference type="InterPro" id="IPR001063">
    <property type="entry name" value="Ribosomal_uL22"/>
</dbReference>
<dbReference type="InterPro" id="IPR005727">
    <property type="entry name" value="Ribosomal_uL22_bac/chlpt-type"/>
</dbReference>
<dbReference type="InterPro" id="IPR047867">
    <property type="entry name" value="Ribosomal_uL22_bac/org-type"/>
</dbReference>
<dbReference type="InterPro" id="IPR036394">
    <property type="entry name" value="Ribosomal_uL22_sf"/>
</dbReference>
<dbReference type="NCBIfam" id="TIGR01044">
    <property type="entry name" value="rplV_bact"/>
    <property type="match status" value="1"/>
</dbReference>
<dbReference type="PANTHER" id="PTHR13501">
    <property type="entry name" value="CHLOROPLAST 50S RIBOSOMAL PROTEIN L22-RELATED"/>
    <property type="match status" value="1"/>
</dbReference>
<dbReference type="PANTHER" id="PTHR13501:SF8">
    <property type="entry name" value="LARGE RIBOSOMAL SUBUNIT PROTEIN UL22M"/>
    <property type="match status" value="1"/>
</dbReference>
<dbReference type="Pfam" id="PF00237">
    <property type="entry name" value="Ribosomal_L22"/>
    <property type="match status" value="1"/>
</dbReference>
<dbReference type="SUPFAM" id="SSF54843">
    <property type="entry name" value="Ribosomal protein L22"/>
    <property type="match status" value="1"/>
</dbReference>
<protein>
    <recommendedName>
        <fullName evidence="1">Large ribosomal subunit protein uL22</fullName>
    </recommendedName>
    <alternativeName>
        <fullName evidence="2">50S ribosomal protein L22</fullName>
    </alternativeName>
</protein>
<evidence type="ECO:0000255" key="1">
    <source>
        <dbReference type="HAMAP-Rule" id="MF_01331"/>
    </source>
</evidence>
<evidence type="ECO:0000305" key="2"/>
<organism>
    <name type="scientific">Bacteroides fragilis (strain ATCC 25285 / DSM 2151 / CCUG 4856 / JCM 11019 / LMG 10263 / NCTC 9343 / Onslow / VPI 2553 / EN-2)</name>
    <dbReference type="NCBI Taxonomy" id="272559"/>
    <lineage>
        <taxon>Bacteria</taxon>
        <taxon>Pseudomonadati</taxon>
        <taxon>Bacteroidota</taxon>
        <taxon>Bacteroidia</taxon>
        <taxon>Bacteroidales</taxon>
        <taxon>Bacteroidaceae</taxon>
        <taxon>Bacteroides</taxon>
    </lineage>
</organism>
<reference key="1">
    <citation type="journal article" date="2005" name="Science">
        <title>Extensive DNA inversions in the B. fragilis genome control variable gene expression.</title>
        <authorList>
            <person name="Cerdeno-Tarraga A.-M."/>
            <person name="Patrick S."/>
            <person name="Crossman L.C."/>
            <person name="Blakely G."/>
            <person name="Abratt V."/>
            <person name="Lennard N."/>
            <person name="Poxton I."/>
            <person name="Duerden B."/>
            <person name="Harris B."/>
            <person name="Quail M.A."/>
            <person name="Barron A."/>
            <person name="Clark L."/>
            <person name="Corton C."/>
            <person name="Doggett J."/>
            <person name="Holden M.T.G."/>
            <person name="Larke N."/>
            <person name="Line A."/>
            <person name="Lord A."/>
            <person name="Norbertczak H."/>
            <person name="Ormond D."/>
            <person name="Price C."/>
            <person name="Rabbinowitsch E."/>
            <person name="Woodward J."/>
            <person name="Barrell B.G."/>
            <person name="Parkhill J."/>
        </authorList>
    </citation>
    <scope>NUCLEOTIDE SEQUENCE [LARGE SCALE GENOMIC DNA]</scope>
    <source>
        <strain>ATCC 25285 / DSM 2151 / CCUG 4856 / JCM 11019 / LMG 10263 / NCTC 9343 / Onslow / VPI 2553 / EN-2</strain>
    </source>
</reference>
<sequence>MGARKKISAEKRKEALKTMYFAKLQNVPTSPRKMRLVADMIRGMEVNRALGVLKFSSKEAAARVEKLLRSAIANWEQKNERKAESGELFVTKIFVDGGATLKRMRPAPQGRGYRIRKRSNHVTLFVGSKSNNEDQN</sequence>
<feature type="chain" id="PRO_0000243122" description="Large ribosomal subunit protein uL22">
    <location>
        <begin position="1"/>
        <end position="136"/>
    </location>
</feature>
<name>RL22_BACFN</name>
<keyword id="KW-0687">Ribonucleoprotein</keyword>
<keyword id="KW-0689">Ribosomal protein</keyword>
<keyword id="KW-0694">RNA-binding</keyword>
<keyword id="KW-0699">rRNA-binding</keyword>
<comment type="function">
    <text evidence="1">This protein binds specifically to 23S rRNA; its binding is stimulated by other ribosomal proteins, e.g. L4, L17, and L20. It is important during the early stages of 50S assembly. It makes multiple contacts with different domains of the 23S rRNA in the assembled 50S subunit and ribosome (By similarity).</text>
</comment>
<comment type="function">
    <text evidence="1">The globular domain of the protein is located near the polypeptide exit tunnel on the outside of the subunit, while an extended beta-hairpin is found that lines the wall of the exit tunnel in the center of the 70S ribosome.</text>
</comment>
<comment type="subunit">
    <text evidence="1">Part of the 50S ribosomal subunit.</text>
</comment>
<comment type="similarity">
    <text evidence="1">Belongs to the universal ribosomal protein uL22 family.</text>
</comment>
<comment type="sequence caution" evidence="2">
    <conflict type="erroneous initiation">
        <sequence resource="EMBL-CDS" id="CAH09674"/>
    </conflict>
</comment>